<sequence length="124" mass="12551">MAITKDDILEAVGAMSVMELNDLVKAFEEKFGVSAAAVAVAGPAAAGGAAAAEEQTEFTVTLKSAGANKVGVIKAVREITGLGLKEAKDLVDGAPKPVKEGVDKKTADELVKKLVEAGAEAEAK</sequence>
<accession>B2UEN7</accession>
<name>RL7_RALPJ</name>
<proteinExistence type="inferred from homology"/>
<keyword id="KW-0687">Ribonucleoprotein</keyword>
<keyword id="KW-0689">Ribosomal protein</keyword>
<feature type="chain" id="PRO_1000121476" description="Large ribosomal subunit protein bL12">
    <location>
        <begin position="1"/>
        <end position="124"/>
    </location>
</feature>
<gene>
    <name evidence="1" type="primary">rplL</name>
    <name type="ordered locus">Rpic_3315</name>
</gene>
<organism>
    <name type="scientific">Ralstonia pickettii (strain 12J)</name>
    <dbReference type="NCBI Taxonomy" id="402626"/>
    <lineage>
        <taxon>Bacteria</taxon>
        <taxon>Pseudomonadati</taxon>
        <taxon>Pseudomonadota</taxon>
        <taxon>Betaproteobacteria</taxon>
        <taxon>Burkholderiales</taxon>
        <taxon>Burkholderiaceae</taxon>
        <taxon>Ralstonia</taxon>
    </lineage>
</organism>
<protein>
    <recommendedName>
        <fullName evidence="1">Large ribosomal subunit protein bL12</fullName>
    </recommendedName>
    <alternativeName>
        <fullName evidence="2">50S ribosomal protein L7/L12</fullName>
    </alternativeName>
</protein>
<reference key="1">
    <citation type="submission" date="2008-05" db="EMBL/GenBank/DDBJ databases">
        <title>Complete sequence of chromosome 1 of Ralstonia pickettii 12J.</title>
        <authorList>
            <person name="Lucas S."/>
            <person name="Copeland A."/>
            <person name="Lapidus A."/>
            <person name="Glavina del Rio T."/>
            <person name="Dalin E."/>
            <person name="Tice H."/>
            <person name="Bruce D."/>
            <person name="Goodwin L."/>
            <person name="Pitluck S."/>
            <person name="Meincke L."/>
            <person name="Brettin T."/>
            <person name="Detter J.C."/>
            <person name="Han C."/>
            <person name="Kuske C.R."/>
            <person name="Schmutz J."/>
            <person name="Larimer F."/>
            <person name="Land M."/>
            <person name="Hauser L."/>
            <person name="Kyrpides N."/>
            <person name="Mikhailova N."/>
            <person name="Marsh T."/>
            <person name="Richardson P."/>
        </authorList>
    </citation>
    <scope>NUCLEOTIDE SEQUENCE [LARGE SCALE GENOMIC DNA]</scope>
    <source>
        <strain>12J</strain>
    </source>
</reference>
<comment type="function">
    <text evidence="1">Forms part of the ribosomal stalk which helps the ribosome interact with GTP-bound translation factors. Is thus essential for accurate translation.</text>
</comment>
<comment type="subunit">
    <text evidence="1">Homodimer. Part of the ribosomal stalk of the 50S ribosomal subunit. Forms a multimeric L10(L12)X complex, where L10 forms an elongated spine to which 2 to 4 L12 dimers bind in a sequential fashion. Binds GTP-bound translation factors.</text>
</comment>
<comment type="similarity">
    <text evidence="1">Belongs to the bacterial ribosomal protein bL12 family.</text>
</comment>
<evidence type="ECO:0000255" key="1">
    <source>
        <dbReference type="HAMAP-Rule" id="MF_00368"/>
    </source>
</evidence>
<evidence type="ECO:0000305" key="2"/>
<dbReference type="EMBL" id="CP001068">
    <property type="protein sequence ID" value="ACD28437.1"/>
    <property type="molecule type" value="Genomic_DNA"/>
</dbReference>
<dbReference type="SMR" id="B2UEN7"/>
<dbReference type="STRING" id="402626.Rpic_3315"/>
<dbReference type="KEGG" id="rpi:Rpic_3315"/>
<dbReference type="eggNOG" id="COG0222">
    <property type="taxonomic scope" value="Bacteria"/>
</dbReference>
<dbReference type="HOGENOM" id="CLU_086499_3_2_4"/>
<dbReference type="GO" id="GO:0022625">
    <property type="term" value="C:cytosolic large ribosomal subunit"/>
    <property type="evidence" value="ECO:0007669"/>
    <property type="project" value="TreeGrafter"/>
</dbReference>
<dbReference type="GO" id="GO:0003729">
    <property type="term" value="F:mRNA binding"/>
    <property type="evidence" value="ECO:0007669"/>
    <property type="project" value="TreeGrafter"/>
</dbReference>
<dbReference type="GO" id="GO:0003735">
    <property type="term" value="F:structural constituent of ribosome"/>
    <property type="evidence" value="ECO:0007669"/>
    <property type="project" value="InterPro"/>
</dbReference>
<dbReference type="GO" id="GO:0006412">
    <property type="term" value="P:translation"/>
    <property type="evidence" value="ECO:0007669"/>
    <property type="project" value="UniProtKB-UniRule"/>
</dbReference>
<dbReference type="CDD" id="cd00387">
    <property type="entry name" value="Ribosomal_L7_L12"/>
    <property type="match status" value="1"/>
</dbReference>
<dbReference type="FunFam" id="3.30.1390.10:FF:000001">
    <property type="entry name" value="50S ribosomal protein L7/L12"/>
    <property type="match status" value="1"/>
</dbReference>
<dbReference type="Gene3D" id="3.30.1390.10">
    <property type="match status" value="1"/>
</dbReference>
<dbReference type="Gene3D" id="1.20.5.710">
    <property type="entry name" value="Single helix bin"/>
    <property type="match status" value="1"/>
</dbReference>
<dbReference type="HAMAP" id="MF_00368">
    <property type="entry name" value="Ribosomal_bL12"/>
    <property type="match status" value="1"/>
</dbReference>
<dbReference type="InterPro" id="IPR000206">
    <property type="entry name" value="Ribosomal_bL12"/>
</dbReference>
<dbReference type="InterPro" id="IPR013823">
    <property type="entry name" value="Ribosomal_bL12_C"/>
</dbReference>
<dbReference type="InterPro" id="IPR014719">
    <property type="entry name" value="Ribosomal_bL12_C/ClpS-like"/>
</dbReference>
<dbReference type="InterPro" id="IPR008932">
    <property type="entry name" value="Ribosomal_bL12_oligo"/>
</dbReference>
<dbReference type="InterPro" id="IPR036235">
    <property type="entry name" value="Ribosomal_bL12_oligo_N_sf"/>
</dbReference>
<dbReference type="NCBIfam" id="TIGR00855">
    <property type="entry name" value="L12"/>
    <property type="match status" value="1"/>
</dbReference>
<dbReference type="PANTHER" id="PTHR45987">
    <property type="entry name" value="39S RIBOSOMAL PROTEIN L12"/>
    <property type="match status" value="1"/>
</dbReference>
<dbReference type="PANTHER" id="PTHR45987:SF4">
    <property type="entry name" value="LARGE RIBOSOMAL SUBUNIT PROTEIN BL12M"/>
    <property type="match status" value="1"/>
</dbReference>
<dbReference type="Pfam" id="PF00542">
    <property type="entry name" value="Ribosomal_L12"/>
    <property type="match status" value="1"/>
</dbReference>
<dbReference type="Pfam" id="PF16320">
    <property type="entry name" value="Ribosomal_L12_N"/>
    <property type="match status" value="1"/>
</dbReference>
<dbReference type="SUPFAM" id="SSF54736">
    <property type="entry name" value="ClpS-like"/>
    <property type="match status" value="1"/>
</dbReference>
<dbReference type="SUPFAM" id="SSF48300">
    <property type="entry name" value="Ribosomal protein L7/12, oligomerisation (N-terminal) domain"/>
    <property type="match status" value="1"/>
</dbReference>